<feature type="chain" id="PRO_0000122018" description="Serine--tRNA ligase">
    <location>
        <begin position="1"/>
        <end position="427"/>
    </location>
</feature>
<feature type="binding site" evidence="1">
    <location>
        <begin position="233"/>
        <end position="235"/>
    </location>
    <ligand>
        <name>L-serine</name>
        <dbReference type="ChEBI" id="CHEBI:33384"/>
    </ligand>
</feature>
<feature type="binding site" evidence="1">
    <location>
        <begin position="264"/>
        <end position="266"/>
    </location>
    <ligand>
        <name>ATP</name>
        <dbReference type="ChEBI" id="CHEBI:30616"/>
    </ligand>
</feature>
<feature type="binding site" evidence="1">
    <location>
        <position position="287"/>
    </location>
    <ligand>
        <name>L-serine</name>
        <dbReference type="ChEBI" id="CHEBI:33384"/>
    </ligand>
</feature>
<feature type="binding site" evidence="1">
    <location>
        <begin position="351"/>
        <end position="354"/>
    </location>
    <ligand>
        <name>ATP</name>
        <dbReference type="ChEBI" id="CHEBI:30616"/>
    </ligand>
</feature>
<feature type="binding site" evidence="1">
    <location>
        <position position="387"/>
    </location>
    <ligand>
        <name>L-serine</name>
        <dbReference type="ChEBI" id="CHEBI:33384"/>
    </ligand>
</feature>
<evidence type="ECO:0000255" key="1">
    <source>
        <dbReference type="HAMAP-Rule" id="MF_00176"/>
    </source>
</evidence>
<protein>
    <recommendedName>
        <fullName evidence="1">Serine--tRNA ligase</fullName>
        <ecNumber evidence="1">6.1.1.11</ecNumber>
    </recommendedName>
    <alternativeName>
        <fullName evidence="1">Seryl-tRNA synthetase</fullName>
        <shortName evidence="1">SerRS</shortName>
    </alternativeName>
    <alternativeName>
        <fullName evidence="1">Seryl-tRNA(Ser/Sec) synthetase</fullName>
    </alternativeName>
</protein>
<proteinExistence type="inferred from homology"/>
<keyword id="KW-0030">Aminoacyl-tRNA synthetase</keyword>
<keyword id="KW-0067">ATP-binding</keyword>
<keyword id="KW-0963">Cytoplasm</keyword>
<keyword id="KW-0436">Ligase</keyword>
<keyword id="KW-0547">Nucleotide-binding</keyword>
<keyword id="KW-0648">Protein biosynthesis</keyword>
<keyword id="KW-1185">Reference proteome</keyword>
<organism>
    <name type="scientific">Buchnera aphidicola subsp. Acyrthosiphon pisum (strain APS)</name>
    <name type="common">Acyrthosiphon pisum symbiotic bacterium</name>
    <dbReference type="NCBI Taxonomy" id="107806"/>
    <lineage>
        <taxon>Bacteria</taxon>
        <taxon>Pseudomonadati</taxon>
        <taxon>Pseudomonadota</taxon>
        <taxon>Gammaproteobacteria</taxon>
        <taxon>Enterobacterales</taxon>
        <taxon>Erwiniaceae</taxon>
        <taxon>Buchnera</taxon>
    </lineage>
</organism>
<reference key="1">
    <citation type="journal article" date="2000" name="Nature">
        <title>Genome sequence of the endocellular bacterial symbiont of aphids Buchnera sp. APS.</title>
        <authorList>
            <person name="Shigenobu S."/>
            <person name="Watanabe H."/>
            <person name="Hattori M."/>
            <person name="Sakaki Y."/>
            <person name="Ishikawa H."/>
        </authorList>
    </citation>
    <scope>NUCLEOTIDE SEQUENCE [LARGE SCALE GENOMIC DNA]</scope>
    <source>
        <strain>APS</strain>
    </source>
</reference>
<name>SYS_BUCAI</name>
<comment type="function">
    <text evidence="1">Catalyzes the attachment of serine to tRNA(Ser). Is also able to aminoacylate tRNA(Sec) with serine, to form the misacylated tRNA L-seryl-tRNA(Sec), which will be further converted into selenocysteinyl-tRNA(Sec).</text>
</comment>
<comment type="catalytic activity">
    <reaction evidence="1">
        <text>tRNA(Ser) + L-serine + ATP = L-seryl-tRNA(Ser) + AMP + diphosphate + H(+)</text>
        <dbReference type="Rhea" id="RHEA:12292"/>
        <dbReference type="Rhea" id="RHEA-COMP:9669"/>
        <dbReference type="Rhea" id="RHEA-COMP:9703"/>
        <dbReference type="ChEBI" id="CHEBI:15378"/>
        <dbReference type="ChEBI" id="CHEBI:30616"/>
        <dbReference type="ChEBI" id="CHEBI:33019"/>
        <dbReference type="ChEBI" id="CHEBI:33384"/>
        <dbReference type="ChEBI" id="CHEBI:78442"/>
        <dbReference type="ChEBI" id="CHEBI:78533"/>
        <dbReference type="ChEBI" id="CHEBI:456215"/>
        <dbReference type="EC" id="6.1.1.11"/>
    </reaction>
</comment>
<comment type="catalytic activity">
    <reaction evidence="1">
        <text>tRNA(Sec) + L-serine + ATP = L-seryl-tRNA(Sec) + AMP + diphosphate + H(+)</text>
        <dbReference type="Rhea" id="RHEA:42580"/>
        <dbReference type="Rhea" id="RHEA-COMP:9742"/>
        <dbReference type="Rhea" id="RHEA-COMP:10128"/>
        <dbReference type="ChEBI" id="CHEBI:15378"/>
        <dbReference type="ChEBI" id="CHEBI:30616"/>
        <dbReference type="ChEBI" id="CHEBI:33019"/>
        <dbReference type="ChEBI" id="CHEBI:33384"/>
        <dbReference type="ChEBI" id="CHEBI:78442"/>
        <dbReference type="ChEBI" id="CHEBI:78533"/>
        <dbReference type="ChEBI" id="CHEBI:456215"/>
        <dbReference type="EC" id="6.1.1.11"/>
    </reaction>
</comment>
<comment type="pathway">
    <text evidence="1">Aminoacyl-tRNA biosynthesis; selenocysteinyl-tRNA(Sec) biosynthesis; L-seryl-tRNA(Sec) from L-serine and tRNA(Sec): step 1/1.</text>
</comment>
<comment type="subunit">
    <text evidence="1">Homodimer. The tRNA molecule binds across the dimer.</text>
</comment>
<comment type="subcellular location">
    <subcellularLocation>
        <location evidence="1">Cytoplasm</location>
    </subcellularLocation>
</comment>
<comment type="domain">
    <text evidence="1">Consists of two distinct domains, a catalytic core and a N-terminal extension that is involved in tRNA binding.</text>
</comment>
<comment type="similarity">
    <text evidence="1">Belongs to the class-II aminoacyl-tRNA synthetase family. Type-1 seryl-tRNA synthetase subfamily.</text>
</comment>
<sequence>MLNPYLLRNELHLTAKKLLKKGYKLNISKISSMEEKRKTLQIQTENLQFKHNALSNLFKENKNIKNKNELLRHQVIQSSKDLNASKIELNSLKEKIHHFSMCIPNIPSDDVPEGNTSINNKEIKYWGQKKKYDFEIQDHIELGKKFNELDWKSSAQMSGSRFVIMKGKIALLHRALSQFMLDLHTLKHGYIESYVPYLVHSEALYGTGQLPKFSDDLFHINLTDKKKYILIPTGEVPLTNLVYDQIIDEKDLPIMLTAHTPCFRSEASSYGRDTKGLIRLHQFDKVELVQIVKPEKSYEALEKLTNHAEKVLQLLNLPYRKMLLCTGDTGFAAVKTYDLEVWFPSEKKYREVSSCSNMSDFQARRIKARYRKKSEQKNFFVHTLNGSGLAIGRTLAAILENYQHSNGRIEIPKVLQKKYMQGLEFIN</sequence>
<accession>P57398</accession>
<dbReference type="EC" id="6.1.1.11" evidence="1"/>
<dbReference type="EMBL" id="BA000003">
    <property type="protein sequence ID" value="BAB13021.1"/>
    <property type="molecule type" value="Genomic_DNA"/>
</dbReference>
<dbReference type="RefSeq" id="NP_240135.1">
    <property type="nucleotide sequence ID" value="NC_002528.1"/>
</dbReference>
<dbReference type="RefSeq" id="WP_009874267.1">
    <property type="nucleotide sequence ID" value="NZ_AP036055.1"/>
</dbReference>
<dbReference type="SMR" id="P57398"/>
<dbReference type="STRING" id="563178.BUAP5A_306"/>
<dbReference type="EnsemblBacteria" id="BAB13021">
    <property type="protein sequence ID" value="BAB13021"/>
    <property type="gene ID" value="BAB13021"/>
</dbReference>
<dbReference type="KEGG" id="buc:BU313"/>
<dbReference type="PATRIC" id="fig|107806.10.peg.325"/>
<dbReference type="eggNOG" id="COG0172">
    <property type="taxonomic scope" value="Bacteria"/>
</dbReference>
<dbReference type="HOGENOM" id="CLU_023797_0_1_6"/>
<dbReference type="UniPathway" id="UPA00906">
    <property type="reaction ID" value="UER00895"/>
</dbReference>
<dbReference type="Proteomes" id="UP000001806">
    <property type="component" value="Chromosome"/>
</dbReference>
<dbReference type="GO" id="GO:0005737">
    <property type="term" value="C:cytoplasm"/>
    <property type="evidence" value="ECO:0007669"/>
    <property type="project" value="UniProtKB-SubCell"/>
</dbReference>
<dbReference type="GO" id="GO:0005524">
    <property type="term" value="F:ATP binding"/>
    <property type="evidence" value="ECO:0007669"/>
    <property type="project" value="UniProtKB-UniRule"/>
</dbReference>
<dbReference type="GO" id="GO:0004828">
    <property type="term" value="F:serine-tRNA ligase activity"/>
    <property type="evidence" value="ECO:0007669"/>
    <property type="project" value="UniProtKB-UniRule"/>
</dbReference>
<dbReference type="GO" id="GO:0016260">
    <property type="term" value="P:selenocysteine biosynthetic process"/>
    <property type="evidence" value="ECO:0007669"/>
    <property type="project" value="UniProtKB-UniRule"/>
</dbReference>
<dbReference type="GO" id="GO:0006434">
    <property type="term" value="P:seryl-tRNA aminoacylation"/>
    <property type="evidence" value="ECO:0007669"/>
    <property type="project" value="UniProtKB-UniRule"/>
</dbReference>
<dbReference type="CDD" id="cd00770">
    <property type="entry name" value="SerRS_core"/>
    <property type="match status" value="1"/>
</dbReference>
<dbReference type="Gene3D" id="3.30.930.10">
    <property type="entry name" value="Bira Bifunctional Protein, Domain 2"/>
    <property type="match status" value="1"/>
</dbReference>
<dbReference type="Gene3D" id="1.10.287.40">
    <property type="entry name" value="Serine-tRNA synthetase, tRNA binding domain"/>
    <property type="match status" value="1"/>
</dbReference>
<dbReference type="HAMAP" id="MF_00176">
    <property type="entry name" value="Ser_tRNA_synth_type1"/>
    <property type="match status" value="1"/>
</dbReference>
<dbReference type="InterPro" id="IPR002314">
    <property type="entry name" value="aa-tRNA-synt_IIb"/>
</dbReference>
<dbReference type="InterPro" id="IPR006195">
    <property type="entry name" value="aa-tRNA-synth_II"/>
</dbReference>
<dbReference type="InterPro" id="IPR045864">
    <property type="entry name" value="aa-tRNA-synth_II/BPL/LPL"/>
</dbReference>
<dbReference type="InterPro" id="IPR002317">
    <property type="entry name" value="Ser-tRNA-ligase_type_1"/>
</dbReference>
<dbReference type="InterPro" id="IPR015866">
    <property type="entry name" value="Ser-tRNA-synth_1_N"/>
</dbReference>
<dbReference type="InterPro" id="IPR042103">
    <property type="entry name" value="SerRS_1_N_sf"/>
</dbReference>
<dbReference type="InterPro" id="IPR033729">
    <property type="entry name" value="SerRS_core"/>
</dbReference>
<dbReference type="InterPro" id="IPR010978">
    <property type="entry name" value="tRNA-bd_arm"/>
</dbReference>
<dbReference type="NCBIfam" id="TIGR00414">
    <property type="entry name" value="serS"/>
    <property type="match status" value="1"/>
</dbReference>
<dbReference type="PANTHER" id="PTHR43697:SF1">
    <property type="entry name" value="SERINE--TRNA LIGASE"/>
    <property type="match status" value="1"/>
</dbReference>
<dbReference type="PANTHER" id="PTHR43697">
    <property type="entry name" value="SERYL-TRNA SYNTHETASE"/>
    <property type="match status" value="1"/>
</dbReference>
<dbReference type="Pfam" id="PF02403">
    <property type="entry name" value="Seryl_tRNA_N"/>
    <property type="match status" value="1"/>
</dbReference>
<dbReference type="Pfam" id="PF00587">
    <property type="entry name" value="tRNA-synt_2b"/>
    <property type="match status" value="1"/>
</dbReference>
<dbReference type="PIRSF" id="PIRSF001529">
    <property type="entry name" value="Ser-tRNA-synth_IIa"/>
    <property type="match status" value="1"/>
</dbReference>
<dbReference type="PRINTS" id="PR00981">
    <property type="entry name" value="TRNASYNTHSER"/>
</dbReference>
<dbReference type="SUPFAM" id="SSF55681">
    <property type="entry name" value="Class II aaRS and biotin synthetases"/>
    <property type="match status" value="1"/>
</dbReference>
<dbReference type="SUPFAM" id="SSF46589">
    <property type="entry name" value="tRNA-binding arm"/>
    <property type="match status" value="1"/>
</dbReference>
<dbReference type="PROSITE" id="PS50862">
    <property type="entry name" value="AA_TRNA_LIGASE_II"/>
    <property type="match status" value="1"/>
</dbReference>
<gene>
    <name evidence="1" type="primary">serS</name>
    <name type="ordered locus">BU313</name>
</gene>